<protein>
    <recommendedName>
        <fullName evidence="1">ATP synthase subunit beta</fullName>
        <ecNumber evidence="1">7.1.2.2</ecNumber>
    </recommendedName>
    <alternativeName>
        <fullName evidence="1">ATP synthase F1 sector subunit beta</fullName>
    </alternativeName>
    <alternativeName>
        <fullName evidence="1">F-ATPase subunit beta</fullName>
    </alternativeName>
</protein>
<dbReference type="EC" id="7.1.2.2" evidence="1"/>
<dbReference type="EMBL" id="U15186">
    <property type="protein sequence ID" value="AAA63108.1"/>
    <property type="molecule type" value="Genomic_DNA"/>
</dbReference>
<dbReference type="EMBL" id="AL583920">
    <property type="protein sequence ID" value="CAC31526.1"/>
    <property type="molecule type" value="Genomic_DNA"/>
</dbReference>
<dbReference type="PIR" id="T09974">
    <property type="entry name" value="T09974"/>
</dbReference>
<dbReference type="RefSeq" id="NP_301839.1">
    <property type="nucleotide sequence ID" value="NC_002677.1"/>
</dbReference>
<dbReference type="RefSeq" id="WP_010908163.1">
    <property type="nucleotide sequence ID" value="NC_002677.1"/>
</dbReference>
<dbReference type="SMR" id="P45823"/>
<dbReference type="STRING" id="272631.gene:17574972"/>
<dbReference type="KEGG" id="mle:ML1145"/>
<dbReference type="PATRIC" id="fig|272631.5.peg.2067"/>
<dbReference type="Leproma" id="ML1145"/>
<dbReference type="eggNOG" id="COG0055">
    <property type="taxonomic scope" value="Bacteria"/>
</dbReference>
<dbReference type="HOGENOM" id="CLU_022398_0_2_11"/>
<dbReference type="OrthoDB" id="9801639at2"/>
<dbReference type="Proteomes" id="UP000000806">
    <property type="component" value="Chromosome"/>
</dbReference>
<dbReference type="GO" id="GO:0005886">
    <property type="term" value="C:plasma membrane"/>
    <property type="evidence" value="ECO:0007669"/>
    <property type="project" value="UniProtKB-SubCell"/>
</dbReference>
<dbReference type="GO" id="GO:0045259">
    <property type="term" value="C:proton-transporting ATP synthase complex"/>
    <property type="evidence" value="ECO:0007669"/>
    <property type="project" value="UniProtKB-KW"/>
</dbReference>
<dbReference type="GO" id="GO:0005524">
    <property type="term" value="F:ATP binding"/>
    <property type="evidence" value="ECO:0007669"/>
    <property type="project" value="UniProtKB-UniRule"/>
</dbReference>
<dbReference type="GO" id="GO:0016887">
    <property type="term" value="F:ATP hydrolysis activity"/>
    <property type="evidence" value="ECO:0007669"/>
    <property type="project" value="InterPro"/>
</dbReference>
<dbReference type="GO" id="GO:0046933">
    <property type="term" value="F:proton-transporting ATP synthase activity, rotational mechanism"/>
    <property type="evidence" value="ECO:0007669"/>
    <property type="project" value="UniProtKB-UniRule"/>
</dbReference>
<dbReference type="CDD" id="cd18110">
    <property type="entry name" value="ATP-synt_F1_beta_C"/>
    <property type="match status" value="1"/>
</dbReference>
<dbReference type="CDD" id="cd18115">
    <property type="entry name" value="ATP-synt_F1_beta_N"/>
    <property type="match status" value="1"/>
</dbReference>
<dbReference type="CDD" id="cd01133">
    <property type="entry name" value="F1-ATPase_beta_CD"/>
    <property type="match status" value="1"/>
</dbReference>
<dbReference type="FunFam" id="1.10.1140.10:FF:000001">
    <property type="entry name" value="ATP synthase subunit beta"/>
    <property type="match status" value="1"/>
</dbReference>
<dbReference type="FunFam" id="2.40.10.170:FF:000005">
    <property type="entry name" value="ATP synthase subunit beta"/>
    <property type="match status" value="1"/>
</dbReference>
<dbReference type="FunFam" id="3.40.50.300:FF:000004">
    <property type="entry name" value="ATP synthase subunit beta"/>
    <property type="match status" value="1"/>
</dbReference>
<dbReference type="Gene3D" id="2.40.10.170">
    <property type="match status" value="1"/>
</dbReference>
<dbReference type="Gene3D" id="1.10.1140.10">
    <property type="entry name" value="Bovine Mitochondrial F1-atpase, Atp Synthase Beta Chain, Chain D, domain 3"/>
    <property type="match status" value="1"/>
</dbReference>
<dbReference type="Gene3D" id="3.40.50.300">
    <property type="entry name" value="P-loop containing nucleotide triphosphate hydrolases"/>
    <property type="match status" value="1"/>
</dbReference>
<dbReference type="HAMAP" id="MF_01347">
    <property type="entry name" value="ATP_synth_beta_bact"/>
    <property type="match status" value="1"/>
</dbReference>
<dbReference type="InterPro" id="IPR003593">
    <property type="entry name" value="AAA+_ATPase"/>
</dbReference>
<dbReference type="InterPro" id="IPR055190">
    <property type="entry name" value="ATP-synt_VA_C"/>
</dbReference>
<dbReference type="InterPro" id="IPR005722">
    <property type="entry name" value="ATP_synth_F1_bsu"/>
</dbReference>
<dbReference type="InterPro" id="IPR020003">
    <property type="entry name" value="ATPase_a/bsu_AS"/>
</dbReference>
<dbReference type="InterPro" id="IPR050053">
    <property type="entry name" value="ATPase_alpha/beta_chains"/>
</dbReference>
<dbReference type="InterPro" id="IPR004100">
    <property type="entry name" value="ATPase_F1/V1/A1_a/bsu_N"/>
</dbReference>
<dbReference type="InterPro" id="IPR036121">
    <property type="entry name" value="ATPase_F1/V1/A1_a/bsu_N_sf"/>
</dbReference>
<dbReference type="InterPro" id="IPR000194">
    <property type="entry name" value="ATPase_F1/V1/A1_a/bsu_nucl-bd"/>
</dbReference>
<dbReference type="InterPro" id="IPR024034">
    <property type="entry name" value="ATPase_F1/V1_b/a_C"/>
</dbReference>
<dbReference type="InterPro" id="IPR027417">
    <property type="entry name" value="P-loop_NTPase"/>
</dbReference>
<dbReference type="NCBIfam" id="TIGR01039">
    <property type="entry name" value="atpD"/>
    <property type="match status" value="1"/>
</dbReference>
<dbReference type="PANTHER" id="PTHR15184">
    <property type="entry name" value="ATP SYNTHASE"/>
    <property type="match status" value="1"/>
</dbReference>
<dbReference type="PANTHER" id="PTHR15184:SF71">
    <property type="entry name" value="ATP SYNTHASE SUBUNIT BETA, MITOCHONDRIAL"/>
    <property type="match status" value="1"/>
</dbReference>
<dbReference type="Pfam" id="PF00006">
    <property type="entry name" value="ATP-synt_ab"/>
    <property type="match status" value="1"/>
</dbReference>
<dbReference type="Pfam" id="PF02874">
    <property type="entry name" value="ATP-synt_ab_N"/>
    <property type="match status" value="1"/>
</dbReference>
<dbReference type="Pfam" id="PF22919">
    <property type="entry name" value="ATP-synt_VA_C"/>
    <property type="match status" value="1"/>
</dbReference>
<dbReference type="SMART" id="SM00382">
    <property type="entry name" value="AAA"/>
    <property type="match status" value="1"/>
</dbReference>
<dbReference type="SUPFAM" id="SSF47917">
    <property type="entry name" value="C-terminal domain of alpha and beta subunits of F1 ATP synthase"/>
    <property type="match status" value="1"/>
</dbReference>
<dbReference type="SUPFAM" id="SSF50615">
    <property type="entry name" value="N-terminal domain of alpha and beta subunits of F1 ATP synthase"/>
    <property type="match status" value="1"/>
</dbReference>
<dbReference type="SUPFAM" id="SSF52540">
    <property type="entry name" value="P-loop containing nucleoside triphosphate hydrolases"/>
    <property type="match status" value="1"/>
</dbReference>
<dbReference type="PROSITE" id="PS00152">
    <property type="entry name" value="ATPASE_ALPHA_BETA"/>
    <property type="match status" value="1"/>
</dbReference>
<feature type="chain" id="PRO_0000144452" description="ATP synthase subunit beta">
    <location>
        <begin position="1"/>
        <end position="485"/>
    </location>
</feature>
<feature type="region of interest" description="Disordered" evidence="2">
    <location>
        <begin position="1"/>
        <end position="20"/>
    </location>
</feature>
<feature type="binding site" evidence="1">
    <location>
        <begin position="170"/>
        <end position="177"/>
    </location>
    <ligand>
        <name>ATP</name>
        <dbReference type="ChEBI" id="CHEBI:30616"/>
    </ligand>
</feature>
<name>ATPB_MYCLE</name>
<reference key="1">
    <citation type="submission" date="1994-09" db="EMBL/GenBank/DDBJ databases">
        <authorList>
            <person name="Smith D.R."/>
            <person name="Robison K."/>
        </authorList>
    </citation>
    <scope>NUCLEOTIDE SEQUENCE [GENOMIC DNA]</scope>
</reference>
<reference key="2">
    <citation type="journal article" date="2001" name="Nature">
        <title>Massive gene decay in the leprosy bacillus.</title>
        <authorList>
            <person name="Cole S.T."/>
            <person name="Eiglmeier K."/>
            <person name="Parkhill J."/>
            <person name="James K.D."/>
            <person name="Thomson N.R."/>
            <person name="Wheeler P.R."/>
            <person name="Honore N."/>
            <person name="Garnier T."/>
            <person name="Churcher C.M."/>
            <person name="Harris D.E."/>
            <person name="Mungall K.L."/>
            <person name="Basham D."/>
            <person name="Brown D."/>
            <person name="Chillingworth T."/>
            <person name="Connor R."/>
            <person name="Davies R.M."/>
            <person name="Devlin K."/>
            <person name="Duthoy S."/>
            <person name="Feltwell T."/>
            <person name="Fraser A."/>
            <person name="Hamlin N."/>
            <person name="Holroyd S."/>
            <person name="Hornsby T."/>
            <person name="Jagels K."/>
            <person name="Lacroix C."/>
            <person name="Maclean J."/>
            <person name="Moule S."/>
            <person name="Murphy L.D."/>
            <person name="Oliver K."/>
            <person name="Quail M.A."/>
            <person name="Rajandream M.A."/>
            <person name="Rutherford K.M."/>
            <person name="Rutter S."/>
            <person name="Seeger K."/>
            <person name="Simon S."/>
            <person name="Simmonds M."/>
            <person name="Skelton J."/>
            <person name="Squares R."/>
            <person name="Squares S."/>
            <person name="Stevens K."/>
            <person name="Taylor K."/>
            <person name="Whitehead S."/>
            <person name="Woodward J.R."/>
            <person name="Barrell B.G."/>
        </authorList>
    </citation>
    <scope>NUCLEOTIDE SEQUENCE [LARGE SCALE GENOMIC DNA]</scope>
    <source>
        <strain>TN</strain>
    </source>
</reference>
<comment type="function">
    <text evidence="1">Produces ATP from ADP in the presence of a proton gradient across the membrane. The catalytic sites are hosted primarily by the beta subunits.</text>
</comment>
<comment type="catalytic activity">
    <reaction evidence="1">
        <text>ATP + H2O + 4 H(+)(in) = ADP + phosphate + 5 H(+)(out)</text>
        <dbReference type="Rhea" id="RHEA:57720"/>
        <dbReference type="ChEBI" id="CHEBI:15377"/>
        <dbReference type="ChEBI" id="CHEBI:15378"/>
        <dbReference type="ChEBI" id="CHEBI:30616"/>
        <dbReference type="ChEBI" id="CHEBI:43474"/>
        <dbReference type="ChEBI" id="CHEBI:456216"/>
        <dbReference type="EC" id="7.1.2.2"/>
    </reaction>
</comment>
<comment type="subunit">
    <text evidence="1">F-type ATPases have 2 components, CF(1) - the catalytic core - and CF(0) - the membrane proton channel. CF(1) has five subunits: alpha(3), beta(3), gamma(1), delta(1), epsilon(1). CF(0) has three main subunits: a(1), b(2) and c(9-12). The alpha and beta chains form an alternating ring which encloses part of the gamma chain. CF(1) is attached to CF(0) by a central stalk formed by the gamma and epsilon chains, while a peripheral stalk is formed by the delta and b chains.</text>
</comment>
<comment type="subcellular location">
    <subcellularLocation>
        <location evidence="1">Cell membrane</location>
        <topology evidence="1">Peripheral membrane protein</topology>
    </subcellularLocation>
</comment>
<comment type="similarity">
    <text evidence="1">Belongs to the ATPase alpha/beta chains family.</text>
</comment>
<organism>
    <name type="scientific">Mycobacterium leprae (strain TN)</name>
    <dbReference type="NCBI Taxonomy" id="272631"/>
    <lineage>
        <taxon>Bacteria</taxon>
        <taxon>Bacillati</taxon>
        <taxon>Actinomycetota</taxon>
        <taxon>Actinomycetes</taxon>
        <taxon>Mycobacteriales</taxon>
        <taxon>Mycobacteriaceae</taxon>
        <taxon>Mycobacterium</taxon>
    </lineage>
</organism>
<accession>P45823</accession>
<keyword id="KW-0066">ATP synthesis</keyword>
<keyword id="KW-0067">ATP-binding</keyword>
<keyword id="KW-1003">Cell membrane</keyword>
<keyword id="KW-0139">CF(1)</keyword>
<keyword id="KW-0375">Hydrogen ion transport</keyword>
<keyword id="KW-0406">Ion transport</keyword>
<keyword id="KW-0472">Membrane</keyword>
<keyword id="KW-0547">Nucleotide-binding</keyword>
<keyword id="KW-1185">Reference proteome</keyword>
<keyword id="KW-1278">Translocase</keyword>
<keyword id="KW-0813">Transport</keyword>
<sequence length="485" mass="53034">MSTTKTTKMTVKTGSKGTSGRVVRVTGPVVDVEFPHGFVPELFNALNAKTTFSSLAKTLTLEVAQHLGDNLVRTISLQPTDGLVRGVEVTDTGNSISVPVGEGVKGHVFNALGYCLDEPGYGDEFEHWSIHRKPPSFEELEPRTEMLETGLKVVDLLTPYVRGGKIALFGGAGVGKTVLIQEMINRIARNFGGTSVFAGVGERTREGNDLWVELQEVNVLKDTALVFGQMDEPPGTRMRVALSALTMAEWFRDEASQDVLLFIDNIFRFTQAGSEVSTLLGRMPSAVGYQPTLADEMGELQERITSTRGRSITSMQAVYVPADDYTDPAPATTFAHLDATTELSRSVFAKGIFPAVDPLASSSTILDPGIVGEEHYRVAQEVIRILQRYKDLQDIIAILGIDELSEEDKQLVNRARRIERFLSQNMMAAEQFTGQPGSTVPVKETIDAFDRLCKGEFDHVPEQAFFLIGGLDDLTKKAESLGAKL</sequence>
<proteinExistence type="inferred from homology"/>
<evidence type="ECO:0000255" key="1">
    <source>
        <dbReference type="HAMAP-Rule" id="MF_01347"/>
    </source>
</evidence>
<evidence type="ECO:0000256" key="2">
    <source>
        <dbReference type="SAM" id="MobiDB-lite"/>
    </source>
</evidence>
<gene>
    <name evidence="1" type="primary">atpD</name>
    <name type="ordered locus">ML1145</name>
</gene>